<dbReference type="EMBL" id="AF003098">
    <property type="protein sequence ID" value="AAC49771.1"/>
    <property type="status" value="ALT_FRAME"/>
    <property type="molecule type" value="mRNA"/>
</dbReference>
<dbReference type="EMBL" id="AB008106">
    <property type="protein sequence ID" value="BAA32421.1"/>
    <property type="molecule type" value="mRNA"/>
</dbReference>
<dbReference type="EMBL" id="AP000413">
    <property type="protein sequence ID" value="BAB02150.1"/>
    <property type="molecule type" value="Genomic_DNA"/>
</dbReference>
<dbReference type="EMBL" id="CP002686">
    <property type="protein sequence ID" value="AEE75632.1"/>
    <property type="molecule type" value="Genomic_DNA"/>
</dbReference>
<dbReference type="EMBL" id="AY140030">
    <property type="protein sequence ID" value="AAM98171.1"/>
    <property type="molecule type" value="mRNA"/>
</dbReference>
<dbReference type="EMBL" id="BT010325">
    <property type="protein sequence ID" value="AAQ55276.1"/>
    <property type="molecule type" value="mRNA"/>
</dbReference>
<dbReference type="EMBL" id="AY086232">
    <property type="protein sequence ID" value="AAM64308.1"/>
    <property type="molecule type" value="mRNA"/>
</dbReference>
<dbReference type="PIR" id="T52019">
    <property type="entry name" value="T52019"/>
</dbReference>
<dbReference type="RefSeq" id="NP_188139.1">
    <property type="nucleotide sequence ID" value="NM_112384.2"/>
</dbReference>
<dbReference type="SMR" id="O80340"/>
<dbReference type="BioGRID" id="6086">
    <property type="interactions" value="45"/>
</dbReference>
<dbReference type="FunCoup" id="O80340">
    <property type="interactions" value="259"/>
</dbReference>
<dbReference type="IntAct" id="O80340">
    <property type="interactions" value="39"/>
</dbReference>
<dbReference type="STRING" id="3702.O80340"/>
<dbReference type="PaxDb" id="3702-AT3G15210.1"/>
<dbReference type="ProteomicsDB" id="220567"/>
<dbReference type="EnsemblPlants" id="AT3G15210.1">
    <property type="protein sequence ID" value="AT3G15210.1"/>
    <property type="gene ID" value="AT3G15210"/>
</dbReference>
<dbReference type="GeneID" id="820752"/>
<dbReference type="Gramene" id="AT3G15210.1">
    <property type="protein sequence ID" value="AT3G15210.1"/>
    <property type="gene ID" value="AT3G15210"/>
</dbReference>
<dbReference type="KEGG" id="ath:AT3G15210"/>
<dbReference type="Araport" id="AT3G15210"/>
<dbReference type="TAIR" id="AT3G15210">
    <property type="gene designation" value="ERF4"/>
</dbReference>
<dbReference type="eggNOG" id="ENOG502RYHH">
    <property type="taxonomic scope" value="Eukaryota"/>
</dbReference>
<dbReference type="HOGENOM" id="CLU_042594_5_1_1"/>
<dbReference type="InParanoid" id="O80340"/>
<dbReference type="OMA" id="QTHNNAK"/>
<dbReference type="OrthoDB" id="1931494at2759"/>
<dbReference type="PhylomeDB" id="O80340"/>
<dbReference type="PRO" id="PR:O80340"/>
<dbReference type="Proteomes" id="UP000006548">
    <property type="component" value="Chromosome 3"/>
</dbReference>
<dbReference type="ExpressionAtlas" id="O80340">
    <property type="expression patterns" value="baseline and differential"/>
</dbReference>
<dbReference type="GO" id="GO:0016604">
    <property type="term" value="C:nuclear body"/>
    <property type="evidence" value="ECO:0000314"/>
    <property type="project" value="TAIR"/>
</dbReference>
<dbReference type="GO" id="GO:0005634">
    <property type="term" value="C:nucleus"/>
    <property type="evidence" value="ECO:0000304"/>
    <property type="project" value="TAIR"/>
</dbReference>
<dbReference type="GO" id="GO:0003700">
    <property type="term" value="F:DNA-binding transcription factor activity"/>
    <property type="evidence" value="ECO:0000250"/>
    <property type="project" value="TAIR"/>
</dbReference>
<dbReference type="GO" id="GO:0000976">
    <property type="term" value="F:transcription cis-regulatory region binding"/>
    <property type="evidence" value="ECO:0000353"/>
    <property type="project" value="TAIR"/>
</dbReference>
<dbReference type="GO" id="GO:0071456">
    <property type="term" value="P:cellular response to hypoxia"/>
    <property type="evidence" value="ECO:0007007"/>
    <property type="project" value="TAIR"/>
</dbReference>
<dbReference type="GO" id="GO:0009873">
    <property type="term" value="P:ethylene-activated signaling pathway"/>
    <property type="evidence" value="ECO:0007669"/>
    <property type="project" value="UniProtKB-KW"/>
</dbReference>
<dbReference type="GO" id="GO:0009864">
    <property type="term" value="P:induced systemic resistance, jasmonic acid mediated signaling pathway"/>
    <property type="evidence" value="ECO:0000315"/>
    <property type="project" value="TAIR"/>
</dbReference>
<dbReference type="GO" id="GO:0045892">
    <property type="term" value="P:negative regulation of DNA-templated transcription"/>
    <property type="evidence" value="ECO:0000315"/>
    <property type="project" value="TAIR"/>
</dbReference>
<dbReference type="GO" id="GO:0010105">
    <property type="term" value="P:negative regulation of ethylene-activated signaling pathway"/>
    <property type="evidence" value="ECO:0000304"/>
    <property type="project" value="TAIR"/>
</dbReference>
<dbReference type="GO" id="GO:0009737">
    <property type="term" value="P:response to abscisic acid"/>
    <property type="evidence" value="ECO:0000315"/>
    <property type="project" value="TAIR"/>
</dbReference>
<dbReference type="GO" id="GO:0009723">
    <property type="term" value="P:response to ethylene"/>
    <property type="evidence" value="ECO:0000315"/>
    <property type="project" value="TAIR"/>
</dbReference>
<dbReference type="CDD" id="cd00018">
    <property type="entry name" value="AP2"/>
    <property type="match status" value="1"/>
</dbReference>
<dbReference type="FunFam" id="3.30.730.10:FF:000001">
    <property type="entry name" value="Ethylene-responsive transcription factor 2"/>
    <property type="match status" value="1"/>
</dbReference>
<dbReference type="Gene3D" id="3.30.730.10">
    <property type="entry name" value="AP2/ERF domain"/>
    <property type="match status" value="1"/>
</dbReference>
<dbReference type="InterPro" id="IPR001471">
    <property type="entry name" value="AP2/ERF_dom"/>
</dbReference>
<dbReference type="InterPro" id="IPR036955">
    <property type="entry name" value="AP2/ERF_dom_sf"/>
</dbReference>
<dbReference type="InterPro" id="IPR016177">
    <property type="entry name" value="DNA-bd_dom_sf"/>
</dbReference>
<dbReference type="PANTHER" id="PTHR31677">
    <property type="entry name" value="AP2 DOMAIN CLASS TRANSCRIPTION FACTOR"/>
    <property type="match status" value="1"/>
</dbReference>
<dbReference type="PANTHER" id="PTHR31677:SF231">
    <property type="entry name" value="ETHYLENE-RESPONSIVE TRANSCRIPTION FACTOR 4"/>
    <property type="match status" value="1"/>
</dbReference>
<dbReference type="Pfam" id="PF00847">
    <property type="entry name" value="AP2"/>
    <property type="match status" value="1"/>
</dbReference>
<dbReference type="PRINTS" id="PR00367">
    <property type="entry name" value="ETHRSPELEMNT"/>
</dbReference>
<dbReference type="SMART" id="SM00380">
    <property type="entry name" value="AP2"/>
    <property type="match status" value="1"/>
</dbReference>
<dbReference type="SUPFAM" id="SSF54171">
    <property type="entry name" value="DNA-binding domain"/>
    <property type="match status" value="1"/>
</dbReference>
<dbReference type="PROSITE" id="PS51032">
    <property type="entry name" value="AP2_ERF"/>
    <property type="match status" value="1"/>
</dbReference>
<name>ERF78_ARATH</name>
<accession>O80340</accession>
<accession>O23107</accession>
<accession>Q53XI2</accession>
<reference key="1">
    <citation type="journal article" date="1997" name="Proc. Natl. Acad. Sci. U.S.A.">
        <title>The AP2 domain of APETALA2 defines a large new family of DNA binding proteins in Arabidopsis.</title>
        <authorList>
            <person name="Okamuro J.K."/>
            <person name="Caster B."/>
            <person name="Villarroel R."/>
            <person name="Van Montagu M."/>
            <person name="Jofuku K.D."/>
        </authorList>
    </citation>
    <scope>NUCLEOTIDE SEQUENCE [MRNA]</scope>
    <source>
        <strain>cv. Columbia</strain>
    </source>
</reference>
<reference key="2">
    <citation type="journal article" date="2000" name="Plant Cell">
        <title>Arabidopsis ethylene responsive element binding factors act as transcriptional activators or repressors of GCC box mediated gene expression.</title>
        <authorList>
            <person name="Fujimoto S.Y."/>
            <person name="Ohta M."/>
            <person name="Usui A."/>
            <person name="Shinshi H."/>
            <person name="Ohme-Takagi M."/>
        </authorList>
    </citation>
    <scope>NUCLEOTIDE SEQUENCE [MRNA]</scope>
    <scope>FUNCTION</scope>
    <scope>INDUCTION</scope>
</reference>
<reference key="3">
    <citation type="journal article" date="2000" name="DNA Res.">
        <title>Structural analysis of Arabidopsis thaliana chromosome 3. II. Sequence features of the 4,251,695 bp regions covered by 90 P1, TAC and BAC clones.</title>
        <authorList>
            <person name="Kaneko T."/>
            <person name="Katoh T."/>
            <person name="Sato S."/>
            <person name="Nakamura Y."/>
            <person name="Asamizu E."/>
            <person name="Tabata S."/>
        </authorList>
    </citation>
    <scope>NUCLEOTIDE SEQUENCE [LARGE SCALE GENOMIC DNA]</scope>
    <source>
        <strain>cv. Columbia</strain>
    </source>
</reference>
<reference key="4">
    <citation type="journal article" date="2017" name="Plant J.">
        <title>Araport11: a complete reannotation of the Arabidopsis thaliana reference genome.</title>
        <authorList>
            <person name="Cheng C.Y."/>
            <person name="Krishnakumar V."/>
            <person name="Chan A.P."/>
            <person name="Thibaud-Nissen F."/>
            <person name="Schobel S."/>
            <person name="Town C.D."/>
        </authorList>
    </citation>
    <scope>GENOME REANNOTATION</scope>
    <source>
        <strain>cv. Columbia</strain>
    </source>
</reference>
<reference key="5">
    <citation type="journal article" date="2003" name="Science">
        <title>Empirical analysis of transcriptional activity in the Arabidopsis genome.</title>
        <authorList>
            <person name="Yamada K."/>
            <person name="Lim J."/>
            <person name="Dale J.M."/>
            <person name="Chen H."/>
            <person name="Shinn P."/>
            <person name="Palm C.J."/>
            <person name="Southwick A.M."/>
            <person name="Wu H.C."/>
            <person name="Kim C.J."/>
            <person name="Nguyen M."/>
            <person name="Pham P.K."/>
            <person name="Cheuk R.F."/>
            <person name="Karlin-Newmann G."/>
            <person name="Liu S.X."/>
            <person name="Lam B."/>
            <person name="Sakano H."/>
            <person name="Wu T."/>
            <person name="Yu G."/>
            <person name="Miranda M."/>
            <person name="Quach H.L."/>
            <person name="Tripp M."/>
            <person name="Chang C.H."/>
            <person name="Lee J.M."/>
            <person name="Toriumi M.J."/>
            <person name="Chan M.M."/>
            <person name="Tang C.C."/>
            <person name="Onodera C.S."/>
            <person name="Deng J.M."/>
            <person name="Akiyama K."/>
            <person name="Ansari Y."/>
            <person name="Arakawa T."/>
            <person name="Banh J."/>
            <person name="Banno F."/>
            <person name="Bowser L."/>
            <person name="Brooks S.Y."/>
            <person name="Carninci P."/>
            <person name="Chao Q."/>
            <person name="Choy N."/>
            <person name="Enju A."/>
            <person name="Goldsmith A.D."/>
            <person name="Gurjal M."/>
            <person name="Hansen N.F."/>
            <person name="Hayashizaki Y."/>
            <person name="Johnson-Hopson C."/>
            <person name="Hsuan V.W."/>
            <person name="Iida K."/>
            <person name="Karnes M."/>
            <person name="Khan S."/>
            <person name="Koesema E."/>
            <person name="Ishida J."/>
            <person name="Jiang P.X."/>
            <person name="Jones T."/>
            <person name="Kawai J."/>
            <person name="Kamiya A."/>
            <person name="Meyers C."/>
            <person name="Nakajima M."/>
            <person name="Narusaka M."/>
            <person name="Seki M."/>
            <person name="Sakurai T."/>
            <person name="Satou M."/>
            <person name="Tamse R."/>
            <person name="Vaysberg M."/>
            <person name="Wallender E.K."/>
            <person name="Wong C."/>
            <person name="Yamamura Y."/>
            <person name="Yuan S."/>
            <person name="Shinozaki K."/>
            <person name="Davis R.W."/>
            <person name="Theologis A."/>
            <person name="Ecker J.R."/>
        </authorList>
    </citation>
    <scope>NUCLEOTIDE SEQUENCE [LARGE SCALE MRNA]</scope>
    <source>
        <strain>cv. Columbia</strain>
    </source>
</reference>
<reference key="6">
    <citation type="submission" date="2002-03" db="EMBL/GenBank/DDBJ databases">
        <title>Full-length cDNA from Arabidopsis thaliana.</title>
        <authorList>
            <person name="Brover V.V."/>
            <person name="Troukhan M.E."/>
            <person name="Alexandrov N.A."/>
            <person name="Lu Y.-P."/>
            <person name="Flavell R.B."/>
            <person name="Feldmann K.A."/>
        </authorList>
    </citation>
    <scope>NUCLEOTIDE SEQUENCE [LARGE SCALE MRNA]</scope>
</reference>
<reference key="7">
    <citation type="journal article" date="1998" name="J. Biol. Chem.">
        <title>Unique mode of GCC box recognition by the DNA-binding domain of ethylene-responsive element-binding factor (ERF domain) in plant.</title>
        <authorList>
            <person name="Hao D."/>
            <person name="Ohme-Takagi M."/>
            <person name="Sarai A."/>
        </authorList>
    </citation>
    <scope>FUNCTION</scope>
</reference>
<reference key="8">
    <citation type="journal article" date="2001" name="Plant Cell">
        <title>Repression domains of class II ERF transcriptional repressors share an essential motif for active repression.</title>
        <authorList>
            <person name="Ohta M."/>
            <person name="Matsui K."/>
            <person name="Hiratsu K."/>
            <person name="Shinshi H."/>
            <person name="Ohme-Takagi M."/>
        </authorList>
    </citation>
    <scope>FUNCTION</scope>
    <scope>DOMAIN</scope>
</reference>
<reference key="9">
    <citation type="journal article" date="2003" name="Plant Physiol.">
        <title>A role for the GCC-box in jasmonate-mediated activation of the PDF1.2 gene of Arabidopsis.</title>
        <authorList>
            <person name="Brown R.L."/>
            <person name="Kazan K."/>
            <person name="McGrath K.C."/>
            <person name="Maclean D.J."/>
            <person name="Manners J.M."/>
        </authorList>
    </citation>
    <scope>INDUCTION</scope>
</reference>
<reference key="10">
    <citation type="journal article" date="2006" name="Plant Mol. Biol.">
        <title>AtSAP18, an orthologue of human SAP18, is involved in the regulation of salt stress and mediates transcriptional repression in Arabidopsis.</title>
        <authorList>
            <person name="Song C.-P."/>
            <person name="Galbraith D.W."/>
        </authorList>
    </citation>
    <scope>INTERACTION WITH SAP18</scope>
</reference>
<reference key="11">
    <citation type="journal article" date="2006" name="Plant Physiol.">
        <title>Genome-wide analysis of the ERF gene family in Arabidopsis and rice.</title>
        <authorList>
            <person name="Nakano T."/>
            <person name="Suzuki K."/>
            <person name="Fujimura T."/>
            <person name="Shinshi H."/>
        </authorList>
    </citation>
    <scope>GENE FAMILY</scope>
    <scope>NOMENCLATURE</scope>
</reference>
<sequence length="222" mass="23741">MAKMGLKPDPATTNQTHNNAKEIRYRGVRKRPWGRYAAEIRDPGKKTRVWLGTFDTAEEAARAYDTAARDFRGAKAKTNFPTFLELSDQKVPTGFARSPSQSSTLDCASPPTLVVPSATAGNVPPQLELSLGGGGGGSCYQIPMSRPVYFLDLMGIGNVGRGQPPPVTSAFRSPVVHVATKMACGAQSDSDSSSVVDFEGGMEKRSQLLDLDLNLPPPSEQA</sequence>
<organism>
    <name type="scientific">Arabidopsis thaliana</name>
    <name type="common">Mouse-ear cress</name>
    <dbReference type="NCBI Taxonomy" id="3702"/>
    <lineage>
        <taxon>Eukaryota</taxon>
        <taxon>Viridiplantae</taxon>
        <taxon>Streptophyta</taxon>
        <taxon>Embryophyta</taxon>
        <taxon>Tracheophyta</taxon>
        <taxon>Spermatophyta</taxon>
        <taxon>Magnoliopsida</taxon>
        <taxon>eudicotyledons</taxon>
        <taxon>Gunneridae</taxon>
        <taxon>Pentapetalae</taxon>
        <taxon>rosids</taxon>
        <taxon>malvids</taxon>
        <taxon>Brassicales</taxon>
        <taxon>Brassicaceae</taxon>
        <taxon>Camelineae</taxon>
        <taxon>Arabidopsis</taxon>
    </lineage>
</organism>
<feature type="chain" id="PRO_0000112554" description="Ethylene-responsive transcription factor 4">
    <location>
        <begin position="1"/>
        <end position="222"/>
    </location>
</feature>
<feature type="DNA-binding region" description="AP2/ERF" evidence="1">
    <location>
        <begin position="24"/>
        <end position="81"/>
    </location>
</feature>
<feature type="region of interest" description="Disordered" evidence="2">
    <location>
        <begin position="1"/>
        <end position="22"/>
    </location>
</feature>
<feature type="short sequence motif" description="EAR-like (transcriptional repression)">
    <location>
        <begin position="211"/>
        <end position="217"/>
    </location>
</feature>
<protein>
    <recommendedName>
        <fullName>Ethylene-responsive transcription factor 4</fullName>
        <shortName>AtERF4</shortName>
    </recommendedName>
    <alternativeName>
        <fullName>Ethylene-responsive element-binding factor 4</fullName>
        <shortName>EREBP-4</shortName>
    </alternativeName>
    <alternativeName>
        <fullName>Protein RELATED TO APETALA2 5</fullName>
    </alternativeName>
</protein>
<proteinExistence type="evidence at protein level"/>
<keyword id="KW-0238">DNA-binding</keyword>
<keyword id="KW-0936">Ethylene signaling pathway</keyword>
<keyword id="KW-0539">Nucleus</keyword>
<keyword id="KW-0611">Plant defense</keyword>
<keyword id="KW-1185">Reference proteome</keyword>
<keyword id="KW-0678">Repressor</keyword>
<keyword id="KW-0804">Transcription</keyword>
<keyword id="KW-0805">Transcription regulation</keyword>
<gene>
    <name type="primary">ERF4</name>
    <name type="synonym">ERF-4</name>
    <name type="synonym">ERF078</name>
    <name type="synonym">RAP2-5</name>
    <name type="ordered locus">At3g15210</name>
    <name type="ORF">K7L4.1</name>
</gene>
<evidence type="ECO:0000255" key="1">
    <source>
        <dbReference type="PROSITE-ProRule" id="PRU00366"/>
    </source>
</evidence>
<evidence type="ECO:0000256" key="2">
    <source>
        <dbReference type="SAM" id="MobiDB-lite"/>
    </source>
</evidence>
<evidence type="ECO:0000269" key="3">
    <source>
    </source>
</evidence>
<evidence type="ECO:0000269" key="4">
    <source>
    </source>
</evidence>
<evidence type="ECO:0000269" key="5">
    <source>
    </source>
</evidence>
<evidence type="ECO:0000269" key="6">
    <source>
    </source>
</evidence>
<evidence type="ECO:0000269" key="7">
    <source>
    </source>
</evidence>
<evidence type="ECO:0000305" key="8"/>
<comment type="function">
    <text evidence="3 4 7">Acts as a transcriptional repressor. Binds to the GCC-box pathogenesis-related promoter element. Involved in the regulation of gene expression by stress factors and by components of stress signal transduction pathways, and could also regulate other AtERFs.</text>
</comment>
<comment type="subunit">
    <text evidence="6">Interacts with SAP18.</text>
</comment>
<comment type="interaction">
    <interactant intactId="EBI-966009">
        <id>O80340</id>
    </interactant>
    <interactant intactId="EBI-25522986">
        <id>Q9FIW5</id>
        <label>ANAC094</label>
    </interactant>
    <organismsDiffer>false</organismsDiffer>
    <experiments>3</experiments>
</comment>
<comment type="interaction">
    <interactant intactId="EBI-966009">
        <id>O80340</id>
    </interactant>
    <interactant intactId="EBI-965964">
        <id>O64644</id>
        <label>At2g45640</label>
    </interactant>
    <organismsDiffer>false</organismsDiffer>
    <experiments>2</experiments>
</comment>
<comment type="interaction">
    <interactant intactId="EBI-966009">
        <id>O80340</id>
    </interactant>
    <interactant intactId="EBI-15203988">
        <id>Q9LS00</id>
        <label>HHO1</label>
    </interactant>
    <organismsDiffer>false</organismsDiffer>
    <experiments>5</experiments>
</comment>
<comment type="interaction">
    <interactant intactId="EBI-966009">
        <id>O80340</id>
    </interactant>
    <interactant intactId="EBI-4429217">
        <id>Q8VZS3</id>
        <label>HHO2</label>
    </interactant>
    <organismsDiffer>false</organismsDiffer>
    <experiments>3</experiments>
</comment>
<comment type="interaction">
    <interactant intactId="EBI-966009">
        <id>O80340</id>
    </interactant>
    <interactant intactId="EBI-2298866">
        <id>Q9FPE8</id>
        <label>HHO3</label>
    </interactant>
    <organismsDiffer>false</organismsDiffer>
    <experiments>3</experiments>
</comment>
<comment type="interaction">
    <interactant intactId="EBI-966009">
        <id>O80340</id>
    </interactant>
    <interactant intactId="EBI-15198743">
        <id>Q9LSI4</id>
        <label>MGH6.1</label>
    </interactant>
    <organismsDiffer>false</organismsDiffer>
    <experiments>4</experiments>
</comment>
<comment type="interaction">
    <interactant intactId="EBI-966009">
        <id>O80340</id>
    </interactant>
    <interactant intactId="EBI-3133327">
        <id>O82277</id>
        <label>TCP10</label>
    </interactant>
    <organismsDiffer>false</organismsDiffer>
    <experiments>3</experiments>
</comment>
<comment type="interaction">
    <interactant intactId="EBI-966009">
        <id>O80340</id>
    </interactant>
    <interactant intactId="EBI-4424877">
        <id>Q9S7W5</id>
        <label>TCP13</label>
    </interactant>
    <organismsDiffer>false</organismsDiffer>
    <experiments>5</experiments>
</comment>
<comment type="interaction">
    <interactant intactId="EBI-966009">
        <id>O80340</id>
    </interactant>
    <interactant intactId="EBI-4424563">
        <id>Q93Z00</id>
        <label>TCP14</label>
    </interactant>
    <organismsDiffer>false</organismsDiffer>
    <experiments>3</experiments>
</comment>
<comment type="interaction">
    <interactant intactId="EBI-966009">
        <id>O80340</id>
    </interactant>
    <interactant intactId="EBI-4426144">
        <id>Q9C9L2</id>
        <label>TCP15</label>
    </interactant>
    <organismsDiffer>false</organismsDiffer>
    <experiments>6</experiments>
</comment>
<comment type="interaction">
    <interactant intactId="EBI-966009">
        <id>O80340</id>
    </interactant>
    <interactant intactId="EBI-15198627">
        <id>Q9M1U4</id>
        <label>TCP16</label>
    </interactant>
    <organismsDiffer>false</organismsDiffer>
    <experiments>5</experiments>
</comment>
<comment type="interaction">
    <interactant intactId="EBI-966009">
        <id>O80340</id>
    </interactant>
    <interactant intactId="EBI-4426168">
        <id>Q9FTA2</id>
        <label>TCP21</label>
    </interactant>
    <organismsDiffer>false</organismsDiffer>
    <experiments>5</experiments>
</comment>
<comment type="interaction">
    <interactant intactId="EBI-966009">
        <id>O80340</id>
    </interactant>
    <interactant intactId="EBI-25522447">
        <id>Q9MAH8</id>
        <label>TCP3</label>
    </interactant>
    <organismsDiffer>false</organismsDiffer>
    <experiments>3</experiments>
</comment>
<comment type="interaction">
    <interactant intactId="EBI-966009">
        <id>O80340</id>
    </interactant>
    <interactant intactId="EBI-4424568">
        <id>Q9LVG2</id>
        <label>TOE2</label>
    </interactant>
    <organismsDiffer>false</organismsDiffer>
    <experiments>3</experiments>
</comment>
<comment type="interaction">
    <interactant intactId="EBI-966009">
        <id>O80340</id>
    </interactant>
    <interactant intactId="EBI-1115523">
        <id>Q9LDT3</id>
        <label>YAB4</label>
    </interactant>
    <organismsDiffer>false</organismsDiffer>
    <experiments>5</experiments>
</comment>
<comment type="subcellular location">
    <subcellularLocation>
        <location evidence="8">Nucleus</location>
    </subcellularLocation>
</comment>
<comment type="induction">
    <text evidence="3 5">Induced by jasmonate (JA) and by Alternaria brassicicola (locally and systemically), but only slightly by ethylene. Strong induction by wounding, cold or drought stress does not require EIN2, whereas induction by NaCl does. Transcripts accumulate in cycloheximide-treated plants, a protein synthesis inhibitor. Seems to not be influenced by exogenous abscisic acid (ABA), and heat stress.</text>
</comment>
<comment type="domain">
    <text evidence="4">Contains a slightly degenerated ERF-associated amphiphilic repression (EAR) motif, which may be involved in the activity of transcriptional repression.</text>
</comment>
<comment type="similarity">
    <text evidence="8">Belongs to the AP2/ERF transcription factor family. ERF subfamily.</text>
</comment>
<comment type="sequence caution" evidence="8">
    <conflict type="frameshift">
        <sequence resource="EMBL-CDS" id="AAC49771"/>
    </conflict>
</comment>